<reference key="1">
    <citation type="journal article" date="2011" name="J. Bacteriol.">
        <title>Genome of Ochrobactrum anthropi ATCC 49188 T, a versatile opportunistic pathogen and symbiont of several eukaryotic hosts.</title>
        <authorList>
            <person name="Chain P.S."/>
            <person name="Lang D.M."/>
            <person name="Comerci D.J."/>
            <person name="Malfatti S.A."/>
            <person name="Vergez L.M."/>
            <person name="Shin M."/>
            <person name="Ugalde R.A."/>
            <person name="Garcia E."/>
            <person name="Tolmasky M.E."/>
        </authorList>
    </citation>
    <scope>NUCLEOTIDE SEQUENCE [LARGE SCALE GENOMIC DNA]</scope>
    <source>
        <strain>ATCC 49188 / DSM 6882 / CCUG 24695 / JCM 21032 / LMG 3331 / NBRC 15819 / NCTC 12168 / Alc 37</strain>
    </source>
</reference>
<keyword id="KW-0067">ATP-binding</keyword>
<keyword id="KW-0131">Cell cycle</keyword>
<keyword id="KW-0132">Cell division</keyword>
<keyword id="KW-0963">Cytoplasm</keyword>
<keyword id="KW-0418">Kinase</keyword>
<keyword id="KW-0547">Nucleotide-binding</keyword>
<keyword id="KW-0597">Phosphoprotein</keyword>
<keyword id="KW-1185">Reference proteome</keyword>
<keyword id="KW-0808">Transferase</keyword>
<protein>
    <recommendedName>
        <fullName>Cell-division control histidine kinase PdhS</fullName>
        <ecNumber>2.7.13.3</ecNumber>
    </recommendedName>
</protein>
<sequence>MSGSYPFIDIAALDSIREGFAKGDAQLVLTHDLSAVLWVNGPGAKLFGFDRVEDMIGGGLDLPIATRRQIASSNSNAEGETRTVSVRLGGGLRSDLTRFSVSHITLPDGVSGLLLTADGKDAEAEDIISGLSDDSTHIALIDANSRVIAASPRFAALDISSTTLEDLVIEAADATDRIVKRRIRAGKHSVPGAIARLTDTPPMHLLCIIGDAPVATLEAPAALQGEAEEILEEILPEPVESANTEDASTDQQKPRSFVFEQDAPPARFIWKVGPDGTFSEISPDLAATIGPNAADVVGRRFADVANVFGFDPDGSIAALLDKRDTWSGKRLMWPVEGTDLRVPVELAALPVYSRDREFTGFRGFGLVRPAEAEKDPEEIGLVLAGGIPQARKPVSEPVETATPVEDDDVLALGEEVANDDSPVATLPKPPLDIAPTPGRRESDKVISLLNACAEEKVAADQARMLKEREREERPEGGLTKTERNAFREIADRLRKQGLANSRAETETVAISDEPVIDSSQPVEKTEVKASLIDEVTADEASLPSSGMAYGDETALLANLPVPVIIHSGDKIHYVNQALLDLTGYESLDDIRGAGGVDVLFNSESDDGETRQGMVLRRANGSEEPVDAHLNAISWREGRALMLSLMPVAAAPVSVEAVAAPAEAPVAIDKDDEKQALADHVEELKTILDTATDGVVLIDPEGRIRSMNHSASALFGYERDETEGKFFSMLFAIESQRAAMDYLHGLSGNGVLSVLNDGREVIGREAKGGFIPLFMTIGKLPHTRGFCAVLRDITQWKRTEEELTNARKEAERASSQKTEFLARISHEIRTPLNAIIGFSELMADEKFGSIGNDRYRDYLRDINRSGNHVLALVNDLLDISKIEAGALDMQFEAVSLNDAIAEAIALMQPQANRERVIIRSSFQSNLPDIVADTRSIKQVALNLLSNAVRFTAPGGQVIVSTSYEMNGDVVMRVRDTGIGMTKSEVEQALKPFRQVNALERRKAETAKDWRSEGTGLGLPLTKAMVEANRAQFAIDSTPGHGTVVEIAFPPTRVLAD</sequence>
<gene>
    <name type="primary">pdhS</name>
    <name type="ordered locus">Oant_3923</name>
</gene>
<evidence type="ECO:0000250" key="1"/>
<evidence type="ECO:0000255" key="2">
    <source>
        <dbReference type="PROSITE-ProRule" id="PRU00107"/>
    </source>
</evidence>
<evidence type="ECO:0000255" key="3">
    <source>
        <dbReference type="PROSITE-ProRule" id="PRU00140"/>
    </source>
</evidence>
<evidence type="ECO:0000256" key="4">
    <source>
        <dbReference type="SAM" id="MobiDB-lite"/>
    </source>
</evidence>
<organism>
    <name type="scientific">Brucella anthropi (strain ATCC 49188 / DSM 6882 / CCUG 24695 / JCM 21032 / LMG 3331 / NBRC 15819 / NCTC 12168 / Alc 37)</name>
    <name type="common">Ochrobactrum anthropi</name>
    <dbReference type="NCBI Taxonomy" id="439375"/>
    <lineage>
        <taxon>Bacteria</taxon>
        <taxon>Pseudomonadati</taxon>
        <taxon>Pseudomonadota</taxon>
        <taxon>Alphaproteobacteria</taxon>
        <taxon>Hyphomicrobiales</taxon>
        <taxon>Brucellaceae</taxon>
        <taxon>Brucella/Ochrobactrum group</taxon>
        <taxon>Brucella</taxon>
    </lineage>
</organism>
<comment type="function">
    <text evidence="1">Functions as a polar differentiation marker. Essential protein that, by localizing in the old pole of dividing cells, controls cell division and maturation, probably through control of DivK phosphorylation status and cellular distribution, which in turn regulates CtrA, a transcriptional regulator of the minB operon. The asymmetrical localization of this protein is probably required for cells to enter a new division cycle (By similarity).</text>
</comment>
<comment type="catalytic activity">
    <reaction>
        <text>ATP + protein L-histidine = ADP + protein N-phospho-L-histidine.</text>
        <dbReference type="EC" id="2.7.13.3"/>
    </reaction>
</comment>
<comment type="subunit">
    <text evidence="1">Interacts with DivK.</text>
</comment>
<comment type="subcellular location">
    <subcellularLocation>
        <location evidence="1">Cytoplasm</location>
    </subcellularLocation>
    <text evidence="1">Localizes at the old pole of dividing cells. Colocalizes with DivK (By similarity).</text>
</comment>
<feature type="chain" id="PRO_0000361906" description="Cell-division control histidine kinase PdhS">
    <location>
        <begin position="1"/>
        <end position="1055"/>
    </location>
</feature>
<feature type="domain" description="PAS" evidence="3">
    <location>
        <begin position="679"/>
        <end position="750"/>
    </location>
</feature>
<feature type="domain" description="Histidine kinase" evidence="2">
    <location>
        <begin position="822"/>
        <end position="1051"/>
    </location>
</feature>
<feature type="region of interest" description="Important for polar localization" evidence="1">
    <location>
        <begin position="1"/>
        <end position="626"/>
    </location>
</feature>
<feature type="region of interest" description="Disordered" evidence="4">
    <location>
        <begin position="419"/>
        <end position="439"/>
    </location>
</feature>
<feature type="region of interest" description="Interaction with DivK" evidence="1">
    <location>
        <begin position="627"/>
        <end position="1055"/>
    </location>
</feature>
<feature type="modified residue" description="Phosphohistidine; by autocatalysis" evidence="2">
    <location>
        <position position="825"/>
    </location>
</feature>
<name>PDHS_BRUA4</name>
<proteinExistence type="inferred from homology"/>
<accession>A6X5X4</accession>
<dbReference type="EC" id="2.7.13.3"/>
<dbReference type="EMBL" id="CP000759">
    <property type="protein sequence ID" value="ABS16628.1"/>
    <property type="molecule type" value="Genomic_DNA"/>
</dbReference>
<dbReference type="RefSeq" id="WP_012093273.1">
    <property type="nucleotide sequence ID" value="NC_009668.1"/>
</dbReference>
<dbReference type="SMR" id="A6X5X4"/>
<dbReference type="STRING" id="439375.Oant_3923"/>
<dbReference type="KEGG" id="oan:Oant_3923"/>
<dbReference type="PATRIC" id="fig|439375.7.peg.4095"/>
<dbReference type="eggNOG" id="COG2205">
    <property type="taxonomic scope" value="Bacteria"/>
</dbReference>
<dbReference type="HOGENOM" id="CLU_000445_23_0_5"/>
<dbReference type="PhylomeDB" id="A6X5X4"/>
<dbReference type="Proteomes" id="UP000002301">
    <property type="component" value="Chromosome 2"/>
</dbReference>
<dbReference type="GO" id="GO:0005737">
    <property type="term" value="C:cytoplasm"/>
    <property type="evidence" value="ECO:0007669"/>
    <property type="project" value="UniProtKB-SubCell"/>
</dbReference>
<dbReference type="GO" id="GO:0005886">
    <property type="term" value="C:plasma membrane"/>
    <property type="evidence" value="ECO:0007669"/>
    <property type="project" value="TreeGrafter"/>
</dbReference>
<dbReference type="GO" id="GO:0005524">
    <property type="term" value="F:ATP binding"/>
    <property type="evidence" value="ECO:0007669"/>
    <property type="project" value="UniProtKB-KW"/>
</dbReference>
<dbReference type="GO" id="GO:0009927">
    <property type="term" value="F:histidine phosphotransfer kinase activity"/>
    <property type="evidence" value="ECO:0007669"/>
    <property type="project" value="TreeGrafter"/>
</dbReference>
<dbReference type="GO" id="GO:0000155">
    <property type="term" value="F:phosphorelay sensor kinase activity"/>
    <property type="evidence" value="ECO:0007669"/>
    <property type="project" value="InterPro"/>
</dbReference>
<dbReference type="GO" id="GO:0051301">
    <property type="term" value="P:cell division"/>
    <property type="evidence" value="ECO:0007669"/>
    <property type="project" value="UniProtKB-KW"/>
</dbReference>
<dbReference type="GO" id="GO:0006355">
    <property type="term" value="P:regulation of DNA-templated transcription"/>
    <property type="evidence" value="ECO:0007669"/>
    <property type="project" value="InterPro"/>
</dbReference>
<dbReference type="CDD" id="cd00082">
    <property type="entry name" value="HisKA"/>
    <property type="match status" value="1"/>
</dbReference>
<dbReference type="CDD" id="cd00130">
    <property type="entry name" value="PAS"/>
    <property type="match status" value="1"/>
</dbReference>
<dbReference type="Gene3D" id="1.10.287.130">
    <property type="match status" value="1"/>
</dbReference>
<dbReference type="Gene3D" id="3.30.565.10">
    <property type="entry name" value="Histidine kinase-like ATPase, C-terminal domain"/>
    <property type="match status" value="1"/>
</dbReference>
<dbReference type="Gene3D" id="3.30.450.20">
    <property type="entry name" value="PAS domain"/>
    <property type="match status" value="1"/>
</dbReference>
<dbReference type="InterPro" id="IPR036890">
    <property type="entry name" value="HATPase_C_sf"/>
</dbReference>
<dbReference type="InterPro" id="IPR005467">
    <property type="entry name" value="His_kinase_dom"/>
</dbReference>
<dbReference type="InterPro" id="IPR003661">
    <property type="entry name" value="HisK_dim/P_dom"/>
</dbReference>
<dbReference type="InterPro" id="IPR036097">
    <property type="entry name" value="HisK_dim/P_sf"/>
</dbReference>
<dbReference type="InterPro" id="IPR000014">
    <property type="entry name" value="PAS"/>
</dbReference>
<dbReference type="InterPro" id="IPR035965">
    <property type="entry name" value="PAS-like_dom_sf"/>
</dbReference>
<dbReference type="InterPro" id="IPR013767">
    <property type="entry name" value="PAS_fold"/>
</dbReference>
<dbReference type="InterPro" id="IPR048231">
    <property type="entry name" value="PdhS_histid_kinase"/>
</dbReference>
<dbReference type="InterPro" id="IPR004358">
    <property type="entry name" value="Sig_transdc_His_kin-like_C"/>
</dbReference>
<dbReference type="NCBIfam" id="NF041593">
    <property type="entry name" value="histid_kinase_PdhS"/>
    <property type="match status" value="1"/>
</dbReference>
<dbReference type="NCBIfam" id="TIGR00229">
    <property type="entry name" value="sensory_box"/>
    <property type="match status" value="1"/>
</dbReference>
<dbReference type="PANTHER" id="PTHR43047:SF72">
    <property type="entry name" value="OSMOSENSING HISTIDINE PROTEIN KINASE SLN1"/>
    <property type="match status" value="1"/>
</dbReference>
<dbReference type="PANTHER" id="PTHR43047">
    <property type="entry name" value="TWO-COMPONENT HISTIDINE PROTEIN KINASE"/>
    <property type="match status" value="1"/>
</dbReference>
<dbReference type="Pfam" id="PF02518">
    <property type="entry name" value="HATPase_c"/>
    <property type="match status" value="1"/>
</dbReference>
<dbReference type="Pfam" id="PF00512">
    <property type="entry name" value="HisKA"/>
    <property type="match status" value="1"/>
</dbReference>
<dbReference type="Pfam" id="PF00989">
    <property type="entry name" value="PAS"/>
    <property type="match status" value="1"/>
</dbReference>
<dbReference type="Pfam" id="PF13188">
    <property type="entry name" value="PAS_8"/>
    <property type="match status" value="1"/>
</dbReference>
<dbReference type="Pfam" id="PF13426">
    <property type="entry name" value="PAS_9"/>
    <property type="match status" value="1"/>
</dbReference>
<dbReference type="PRINTS" id="PR00344">
    <property type="entry name" value="BCTRLSENSOR"/>
</dbReference>
<dbReference type="SMART" id="SM00387">
    <property type="entry name" value="HATPase_c"/>
    <property type="match status" value="1"/>
</dbReference>
<dbReference type="SMART" id="SM00388">
    <property type="entry name" value="HisKA"/>
    <property type="match status" value="1"/>
</dbReference>
<dbReference type="SMART" id="SM00091">
    <property type="entry name" value="PAS"/>
    <property type="match status" value="2"/>
</dbReference>
<dbReference type="SUPFAM" id="SSF55874">
    <property type="entry name" value="ATPase domain of HSP90 chaperone/DNA topoisomerase II/histidine kinase"/>
    <property type="match status" value="1"/>
</dbReference>
<dbReference type="SUPFAM" id="SSF47384">
    <property type="entry name" value="Homodimeric domain of signal transducing histidine kinase"/>
    <property type="match status" value="1"/>
</dbReference>
<dbReference type="SUPFAM" id="SSF55785">
    <property type="entry name" value="PYP-like sensor domain (PAS domain)"/>
    <property type="match status" value="2"/>
</dbReference>
<dbReference type="PROSITE" id="PS50109">
    <property type="entry name" value="HIS_KIN"/>
    <property type="match status" value="1"/>
</dbReference>
<dbReference type="PROSITE" id="PS50112">
    <property type="entry name" value="PAS"/>
    <property type="match status" value="1"/>
</dbReference>